<dbReference type="EMBL" id="BT020643">
    <property type="protein sequence ID" value="AAX08660.1"/>
    <property type="molecule type" value="mRNA"/>
</dbReference>
<dbReference type="EMBL" id="BC102043">
    <property type="protein sequence ID" value="AAI02044.1"/>
    <property type="molecule type" value="mRNA"/>
</dbReference>
<dbReference type="RefSeq" id="NP_001030415.1">
    <property type="nucleotide sequence ID" value="NM_001035338.2"/>
</dbReference>
<dbReference type="BMRB" id="Q5EAC6"/>
<dbReference type="SMR" id="Q5EAC6"/>
<dbReference type="FunCoup" id="Q5EAC6">
    <property type="interactions" value="3597"/>
</dbReference>
<dbReference type="STRING" id="9913.ENSBTAP00000036036"/>
<dbReference type="PeptideAtlas" id="Q5EAC6"/>
<dbReference type="GeneID" id="520883"/>
<dbReference type="KEGG" id="bta:520883"/>
<dbReference type="CTD" id="11140"/>
<dbReference type="VEuPathDB" id="HostDB:ENSBTAG00000011699"/>
<dbReference type="InParanoid" id="Q5EAC6"/>
<dbReference type="OMA" id="AEQCIII"/>
<dbReference type="OrthoDB" id="440202at2759"/>
<dbReference type="Reactome" id="R-BTA-1227986">
    <property type="pathway name" value="Signaling by ERBB2"/>
</dbReference>
<dbReference type="Reactome" id="R-BTA-5675482">
    <property type="pathway name" value="Regulation of necroptotic cell death"/>
</dbReference>
<dbReference type="Reactome" id="R-BTA-8863795">
    <property type="pathway name" value="Downregulation of ERBB2 signaling"/>
</dbReference>
<dbReference type="Reactome" id="R-BTA-9013418">
    <property type="pathway name" value="RHOBTB2 GTPase cycle"/>
</dbReference>
<dbReference type="Reactome" id="R-BTA-9652282">
    <property type="pathway name" value="Drug-mediated inhibition of ERBB2 signaling"/>
</dbReference>
<dbReference type="Proteomes" id="UP000009136">
    <property type="component" value="Chromosome 7"/>
</dbReference>
<dbReference type="Bgee" id="ENSBTAG00000011699">
    <property type="expression patterns" value="Expressed in vas deferens and 106 other cell types or tissues"/>
</dbReference>
<dbReference type="GO" id="GO:0005737">
    <property type="term" value="C:cytoplasm"/>
    <property type="evidence" value="ECO:0000318"/>
    <property type="project" value="GO_Central"/>
</dbReference>
<dbReference type="GO" id="GO:0005524">
    <property type="term" value="F:ATP binding"/>
    <property type="evidence" value="ECO:0007669"/>
    <property type="project" value="UniProtKB-KW"/>
</dbReference>
<dbReference type="GO" id="GO:0031072">
    <property type="term" value="F:heat shock protein binding"/>
    <property type="evidence" value="ECO:0000318"/>
    <property type="project" value="GO_Central"/>
</dbReference>
<dbReference type="GO" id="GO:0019901">
    <property type="term" value="F:protein kinase binding"/>
    <property type="evidence" value="ECO:0007669"/>
    <property type="project" value="InterPro"/>
</dbReference>
<dbReference type="GO" id="GO:0051087">
    <property type="term" value="F:protein-folding chaperone binding"/>
    <property type="evidence" value="ECO:0000318"/>
    <property type="project" value="GO_Central"/>
</dbReference>
<dbReference type="GO" id="GO:0051082">
    <property type="term" value="F:unfolded protein binding"/>
    <property type="evidence" value="ECO:0000318"/>
    <property type="project" value="GO_Central"/>
</dbReference>
<dbReference type="GO" id="GO:0006457">
    <property type="term" value="P:protein folding"/>
    <property type="evidence" value="ECO:0000318"/>
    <property type="project" value="GO_Central"/>
</dbReference>
<dbReference type="GO" id="GO:0050821">
    <property type="term" value="P:protein stabilization"/>
    <property type="evidence" value="ECO:0000318"/>
    <property type="project" value="GO_Central"/>
</dbReference>
<dbReference type="FunFam" id="1.20.58.610:FF:000001">
    <property type="entry name" value="Hsp90 co-chaperone Cdc37-like 1"/>
    <property type="match status" value="1"/>
</dbReference>
<dbReference type="Gene3D" id="6.10.140.250">
    <property type="match status" value="1"/>
</dbReference>
<dbReference type="Gene3D" id="1.20.58.610">
    <property type="entry name" value="Cdc37, Hsp90 binding domain"/>
    <property type="match status" value="1"/>
</dbReference>
<dbReference type="InterPro" id="IPR004918">
    <property type="entry name" value="Cdc37"/>
</dbReference>
<dbReference type="InterPro" id="IPR013873">
    <property type="entry name" value="Cdc37_C"/>
</dbReference>
<dbReference type="InterPro" id="IPR013874">
    <property type="entry name" value="Cdc37_Hsp90-bd"/>
</dbReference>
<dbReference type="InterPro" id="IPR038189">
    <property type="entry name" value="Cdc37_Hsp90-bd_sf"/>
</dbReference>
<dbReference type="InterPro" id="IPR013855">
    <property type="entry name" value="Cdc37_N_dom"/>
</dbReference>
<dbReference type="PANTHER" id="PTHR12800">
    <property type="entry name" value="CDC37-RELATED"/>
    <property type="match status" value="1"/>
</dbReference>
<dbReference type="PANTHER" id="PTHR12800:SF3">
    <property type="entry name" value="HSP90 CO-CHAPERONE CDC37"/>
    <property type="match status" value="1"/>
</dbReference>
<dbReference type="Pfam" id="PF08564">
    <property type="entry name" value="CDC37_C"/>
    <property type="match status" value="1"/>
</dbReference>
<dbReference type="Pfam" id="PF08565">
    <property type="entry name" value="CDC37_M"/>
    <property type="match status" value="1"/>
</dbReference>
<dbReference type="Pfam" id="PF03234">
    <property type="entry name" value="CDC37_N"/>
    <property type="match status" value="1"/>
</dbReference>
<dbReference type="SMART" id="SM01069">
    <property type="entry name" value="CDC37_C"/>
    <property type="match status" value="1"/>
</dbReference>
<dbReference type="SMART" id="SM01070">
    <property type="entry name" value="CDC37_M"/>
    <property type="match status" value="1"/>
</dbReference>
<dbReference type="SMART" id="SM01071">
    <property type="entry name" value="CDC37_N"/>
    <property type="match status" value="1"/>
</dbReference>
<dbReference type="SUPFAM" id="SSF101391">
    <property type="entry name" value="Hsp90 co-chaperone CDC37"/>
    <property type="match status" value="1"/>
</dbReference>
<name>CDC37_BOVIN</name>
<feature type="chain" id="PRO_0000423196" description="Hsp90 co-chaperone Cdc37">
    <location>
        <begin position="1"/>
        <end position="380"/>
    </location>
</feature>
<feature type="initiator methionine" description="Removed; alternate" evidence="1">
    <location>
        <position position="1"/>
    </location>
</feature>
<feature type="chain" id="PRO_0000283717" description="Hsp90 co-chaperone Cdc37, N-terminally processed">
    <location>
        <begin position="2"/>
        <end position="380"/>
    </location>
</feature>
<feature type="region of interest" description="Disordered" evidence="3">
    <location>
        <begin position="124"/>
        <end position="145"/>
    </location>
</feature>
<feature type="region of interest" description="Disordered" evidence="3">
    <location>
        <begin position="344"/>
        <end position="380"/>
    </location>
</feature>
<feature type="modified residue" description="N-acetylmethionine" evidence="1">
    <location>
        <position position="1"/>
    </location>
</feature>
<feature type="modified residue" description="N-acetylvaline; in Hsp90 co-chaperone Cdc37, N-terminally processed" evidence="1">
    <location>
        <position position="2"/>
    </location>
</feature>
<feature type="modified residue" description="Phosphoserine" evidence="1">
    <location>
        <position position="13"/>
    </location>
</feature>
<feature type="modified residue" description="N6-acetyllysine" evidence="1">
    <location>
        <position position="80"/>
    </location>
</feature>
<feature type="modified residue" description="Phosphothreonine" evidence="1">
    <location>
        <position position="120"/>
    </location>
</feature>
<feature type="modified residue" description="Phosphoserine" evidence="1">
    <location>
        <position position="122"/>
    </location>
</feature>
<feature type="modified residue" description="N6-acetyllysine" evidence="1">
    <location>
        <position position="156"/>
    </location>
</feature>
<feature type="modified residue" description="Phosphoserine" evidence="1">
    <location>
        <position position="379"/>
    </location>
</feature>
<organism>
    <name type="scientific">Bos taurus</name>
    <name type="common">Bovine</name>
    <dbReference type="NCBI Taxonomy" id="9913"/>
    <lineage>
        <taxon>Eukaryota</taxon>
        <taxon>Metazoa</taxon>
        <taxon>Chordata</taxon>
        <taxon>Craniata</taxon>
        <taxon>Vertebrata</taxon>
        <taxon>Euteleostomi</taxon>
        <taxon>Mammalia</taxon>
        <taxon>Eutheria</taxon>
        <taxon>Laurasiatheria</taxon>
        <taxon>Artiodactyla</taxon>
        <taxon>Ruminantia</taxon>
        <taxon>Pecora</taxon>
        <taxon>Bovidae</taxon>
        <taxon>Bovinae</taxon>
        <taxon>Bos</taxon>
    </lineage>
</organism>
<keyword id="KW-0007">Acetylation</keyword>
<keyword id="KW-0067">ATP-binding</keyword>
<keyword id="KW-0963">Cytoplasm</keyword>
<keyword id="KW-0547">Nucleotide-binding</keyword>
<keyword id="KW-0597">Phosphoprotein</keyword>
<keyword id="KW-1185">Reference proteome</keyword>
<keyword id="KW-0832">Ubl conjugation</keyword>
<proteinExistence type="evidence at transcript level"/>
<reference key="1">
    <citation type="journal article" date="2005" name="BMC Genomics">
        <title>Characterization of 954 bovine full-CDS cDNA sequences.</title>
        <authorList>
            <person name="Harhay G.P."/>
            <person name="Sonstegard T.S."/>
            <person name="Keele J.W."/>
            <person name="Heaton M.P."/>
            <person name="Clawson M.L."/>
            <person name="Snelling W.M."/>
            <person name="Wiedmann R.T."/>
            <person name="Van Tassell C.P."/>
            <person name="Smith T.P.L."/>
        </authorList>
    </citation>
    <scope>NUCLEOTIDE SEQUENCE [LARGE SCALE MRNA]</scope>
</reference>
<reference key="2">
    <citation type="submission" date="2005-08" db="EMBL/GenBank/DDBJ databases">
        <authorList>
            <consortium name="NIH - Mammalian Gene Collection (MGC) project"/>
        </authorList>
    </citation>
    <scope>NUCLEOTIDE SEQUENCE [LARGE SCALE MRNA]</scope>
    <source>
        <strain>Crossbred X Angus</strain>
        <tissue>Ileum</tissue>
    </source>
</reference>
<comment type="function">
    <text evidence="1">Co-chaperone that binds to numerous kinases and promotes their interaction with the Hsp90 complex, resulting in stabilization and promotion of their activity. Inhibits HSP90AA1 ATPase activity.</text>
</comment>
<comment type="subunit">
    <text evidence="1 2">Probably forms a complex composed of chaperones HSP90 and HSP70, co-chaperones STIP1/HOP, CDC37, PPP5C, PTGES3/p23, TSC1 and client protein TSC2. Probably forms a complex composed of chaperones HSP90 and HSP70, co-chaperones CDC37, PPP5C, TSC1 and client protein TSC2, CDK4, AKT, RAF1 and NR3C1; this complex does not contain co-chaperones STIP1/HOP and PTGES3/p23. Forms a complex with Hsp90/HSP90AB1 and CDK6 (By similarity). Interacts with HSP90AA1. Interacts with AR, CDK4, CDK6 and EIF2AK1. Interacts with RB1. Interacts with KSR1. Interacts with FLCN, FNIP1 and FNIP2.</text>
</comment>
<comment type="subcellular location">
    <subcellularLocation>
        <location evidence="1">Cytoplasm</location>
    </subcellularLocation>
</comment>
<comment type="PTM">
    <text evidence="1">Constitutively sumoylated by UBE2I.</text>
</comment>
<comment type="similarity">
    <text evidence="4">Belongs to the CDC37 family.</text>
</comment>
<accession>Q5EAC6</accession>
<evidence type="ECO:0000250" key="1">
    <source>
        <dbReference type="UniProtKB" id="Q16543"/>
    </source>
</evidence>
<evidence type="ECO:0000250" key="2">
    <source>
        <dbReference type="UniProtKB" id="Q63692"/>
    </source>
</evidence>
<evidence type="ECO:0000256" key="3">
    <source>
        <dbReference type="SAM" id="MobiDB-lite"/>
    </source>
</evidence>
<evidence type="ECO:0000305" key="4"/>
<gene>
    <name type="primary">CDC37</name>
</gene>
<protein>
    <recommendedName>
        <fullName>Hsp90 co-chaperone Cdc37</fullName>
    </recommendedName>
    <alternativeName>
        <fullName>Hsp90 chaperone protein kinase-targeting subunit</fullName>
    </alternativeName>
    <alternativeName>
        <fullName>p50Cdc37</fullName>
    </alternativeName>
    <component>
        <recommendedName>
            <fullName>Hsp90 co-chaperone Cdc37, N-terminally processed</fullName>
        </recommendedName>
    </component>
</protein>
<sequence>MVDYSVWDHIEVSDDEDETHPNIDTASLFRWRHQARVERMEQFQKEKEELDRGCRECKRKVAECQRKLKELEVAEGEGGKAELERLQAEAQQLRKEERSWEQKLEEMRKKEKSMPWNVDTLSKDGFSKSMVNTKPEQAEEESEEVREQKHKTFVEKYEKQIKHFGMLRRWDDSQKYLSDNVHLVCEETANYLVIWCIDLEVEEKCALMEQVAHQTIVMQFILELAKSLKVDPRACFRQFFTKIKTADRQYMEGFNDELEAFKDRVRGRAKLRIEKAMKEYEEEERKKRLGPGGLDPVEVYESLPEELQKCFDAKDVQMLQDAISKMDPTDAKYHMQRCIDSGLWVPNSKSSEAKDGEEAGTGDPLLEATSKSGDEKDVSV</sequence>